<organism>
    <name type="scientific">Sus scrofa</name>
    <name type="common">Pig</name>
    <dbReference type="NCBI Taxonomy" id="9823"/>
    <lineage>
        <taxon>Eukaryota</taxon>
        <taxon>Metazoa</taxon>
        <taxon>Chordata</taxon>
        <taxon>Craniata</taxon>
        <taxon>Vertebrata</taxon>
        <taxon>Euteleostomi</taxon>
        <taxon>Mammalia</taxon>
        <taxon>Eutheria</taxon>
        <taxon>Laurasiatheria</taxon>
        <taxon>Artiodactyla</taxon>
        <taxon>Suina</taxon>
        <taxon>Suidae</taxon>
        <taxon>Sus</taxon>
    </lineage>
</organism>
<comment type="function">
    <text>Produced by macrophages, IFN-alpha have antiviral activities. Interferon stimulates the production of two enzymes: a protein kinase and an oligoadenylate synthetase.</text>
</comment>
<comment type="subunit">
    <text evidence="2">Interacts with CR2.</text>
</comment>
<comment type="subcellular location">
    <subcellularLocation>
        <location>Secreted</location>
    </subcellularLocation>
</comment>
<comment type="similarity">
    <text evidence="4">Belongs to the alpha/beta interferon family.</text>
</comment>
<keyword id="KW-0051">Antiviral defense</keyword>
<keyword id="KW-0202">Cytokine</keyword>
<keyword id="KW-1015">Disulfide bond</keyword>
<keyword id="KW-1185">Reference proteome</keyword>
<keyword id="KW-0964">Secreted</keyword>
<keyword id="KW-0732">Signal</keyword>
<feature type="signal peptide" evidence="3">
    <location>
        <begin position="1"/>
        <end position="23"/>
    </location>
</feature>
<feature type="chain" id="PRO_0000016395" description="Interferon alpha-1">
    <location>
        <begin position="24"/>
        <end position="189"/>
    </location>
</feature>
<feature type="disulfide bond" evidence="1">
    <location>
        <begin position="24"/>
        <end position="122"/>
    </location>
</feature>
<feature type="disulfide bond" evidence="1">
    <location>
        <begin position="52"/>
        <end position="162"/>
    </location>
</feature>
<proteinExistence type="inferred from homology"/>
<reference key="1">
    <citation type="journal article" date="1991" name="J. Interferon Res.">
        <title>The porcine family of interferon-omega: cloning, structural analysis, and functional studies of five related genes.</title>
        <authorList>
            <person name="Lefevre F."/>
            <person name="la Bonnardiere C."/>
            <person name="Mege D."/>
        </authorList>
    </citation>
    <scope>NUCLEOTIDE SEQUENCE [GENOMIC DNA]</scope>
    <source>
        <strain>Domestica</strain>
        <tissue>Liver</tissue>
    </source>
</reference>
<reference key="2">
    <citation type="journal article" date="1986" name="J. Interferon Res.">
        <title>Molecular cloning and sequencing of a gene encoding biologically active porcine alpha-interferon.</title>
        <authorList>
            <person name="Lefevre F."/>
            <person name="la Bonnardiere C."/>
        </authorList>
    </citation>
    <scope>NUCLEOTIDE SEQUENCE [GENOMIC DNA]</scope>
</reference>
<name>IFNA1_PIG</name>
<dbReference type="EMBL" id="X57191">
    <property type="protein sequence ID" value="CAA40477.1"/>
    <property type="molecule type" value="Genomic_DNA"/>
</dbReference>
<dbReference type="EMBL" id="M28623">
    <property type="protein sequence ID" value="AAA31053.1"/>
    <property type="molecule type" value="Genomic_DNA"/>
</dbReference>
<dbReference type="PIR" id="S23709">
    <property type="entry name" value="S23709"/>
</dbReference>
<dbReference type="SMR" id="P49879"/>
<dbReference type="FunCoup" id="P49879">
    <property type="interactions" value="48"/>
</dbReference>
<dbReference type="STRING" id="9823.ENSSSCP00000067859"/>
<dbReference type="PaxDb" id="9823-ENSSSCP00000028605"/>
<dbReference type="eggNOG" id="ENOG502SQAC">
    <property type="taxonomic scope" value="Eukaryota"/>
</dbReference>
<dbReference type="InParanoid" id="P49879"/>
<dbReference type="Proteomes" id="UP000008227">
    <property type="component" value="Unplaced"/>
</dbReference>
<dbReference type="Proteomes" id="UP000314985">
    <property type="component" value="Unplaced"/>
</dbReference>
<dbReference type="Proteomes" id="UP000694570">
    <property type="component" value="Unplaced"/>
</dbReference>
<dbReference type="Proteomes" id="UP000694571">
    <property type="component" value="Unplaced"/>
</dbReference>
<dbReference type="Proteomes" id="UP000694720">
    <property type="component" value="Unplaced"/>
</dbReference>
<dbReference type="Proteomes" id="UP000694722">
    <property type="component" value="Unplaced"/>
</dbReference>
<dbReference type="Proteomes" id="UP000694723">
    <property type="component" value="Unplaced"/>
</dbReference>
<dbReference type="Proteomes" id="UP000694724">
    <property type="component" value="Unplaced"/>
</dbReference>
<dbReference type="Proteomes" id="UP000694725">
    <property type="component" value="Unplaced"/>
</dbReference>
<dbReference type="Proteomes" id="UP000694726">
    <property type="component" value="Unplaced"/>
</dbReference>
<dbReference type="Proteomes" id="UP000694727">
    <property type="component" value="Unplaced"/>
</dbReference>
<dbReference type="Proteomes" id="UP000694728">
    <property type="component" value="Unplaced"/>
</dbReference>
<dbReference type="GO" id="GO:0005615">
    <property type="term" value="C:extracellular space"/>
    <property type="evidence" value="ECO:0000318"/>
    <property type="project" value="GO_Central"/>
</dbReference>
<dbReference type="GO" id="GO:0005125">
    <property type="term" value="F:cytokine activity"/>
    <property type="evidence" value="ECO:0000318"/>
    <property type="project" value="GO_Central"/>
</dbReference>
<dbReference type="GO" id="GO:0005132">
    <property type="term" value="F:type I interferon receptor binding"/>
    <property type="evidence" value="ECO:0000318"/>
    <property type="project" value="GO_Central"/>
</dbReference>
<dbReference type="GO" id="GO:0002250">
    <property type="term" value="P:adaptive immune response"/>
    <property type="evidence" value="ECO:0000318"/>
    <property type="project" value="GO_Central"/>
</dbReference>
<dbReference type="GO" id="GO:0002312">
    <property type="term" value="P:B cell activation involved in immune response"/>
    <property type="evidence" value="ECO:0000318"/>
    <property type="project" value="GO_Central"/>
</dbReference>
<dbReference type="GO" id="GO:0051607">
    <property type="term" value="P:defense response to virus"/>
    <property type="evidence" value="ECO:0007669"/>
    <property type="project" value="UniProtKB-KW"/>
</dbReference>
<dbReference type="GO" id="GO:0006959">
    <property type="term" value="P:humoral immune response"/>
    <property type="evidence" value="ECO:0000318"/>
    <property type="project" value="GO_Central"/>
</dbReference>
<dbReference type="GO" id="GO:0002323">
    <property type="term" value="P:natural killer cell activation involved in immune response"/>
    <property type="evidence" value="ECO:0000318"/>
    <property type="project" value="GO_Central"/>
</dbReference>
<dbReference type="GO" id="GO:0043330">
    <property type="term" value="P:response to exogenous dsRNA"/>
    <property type="evidence" value="ECO:0000318"/>
    <property type="project" value="GO_Central"/>
</dbReference>
<dbReference type="GO" id="GO:0002286">
    <property type="term" value="P:T cell activation involved in immune response"/>
    <property type="evidence" value="ECO:0000318"/>
    <property type="project" value="GO_Central"/>
</dbReference>
<dbReference type="GO" id="GO:0060337">
    <property type="term" value="P:type I interferon-mediated signaling pathway"/>
    <property type="evidence" value="ECO:0000318"/>
    <property type="project" value="GO_Central"/>
</dbReference>
<dbReference type="CDD" id="cd00095">
    <property type="entry name" value="IFab"/>
    <property type="match status" value="1"/>
</dbReference>
<dbReference type="FunFam" id="1.20.1250.10:FF:000001">
    <property type="entry name" value="Interferon alpha"/>
    <property type="match status" value="1"/>
</dbReference>
<dbReference type="Gene3D" id="1.20.1250.10">
    <property type="match status" value="1"/>
</dbReference>
<dbReference type="InterPro" id="IPR009079">
    <property type="entry name" value="4_helix_cytokine-like_core"/>
</dbReference>
<dbReference type="InterPro" id="IPR000471">
    <property type="entry name" value="Interferon_alpha/beta/delta"/>
</dbReference>
<dbReference type="PANTHER" id="PTHR11691:SF60">
    <property type="entry name" value="INTERFERON ALPHA-5"/>
    <property type="match status" value="1"/>
</dbReference>
<dbReference type="PANTHER" id="PTHR11691">
    <property type="entry name" value="TYPE I INTERFERON"/>
    <property type="match status" value="1"/>
</dbReference>
<dbReference type="Pfam" id="PF00143">
    <property type="entry name" value="Interferon"/>
    <property type="match status" value="1"/>
</dbReference>
<dbReference type="PRINTS" id="PR00266">
    <property type="entry name" value="INTERFERONAB"/>
</dbReference>
<dbReference type="SMART" id="SM00076">
    <property type="entry name" value="IFabd"/>
    <property type="match status" value="1"/>
</dbReference>
<dbReference type="SUPFAM" id="SSF47266">
    <property type="entry name" value="4-helical cytokines"/>
    <property type="match status" value="1"/>
</dbReference>
<dbReference type="PROSITE" id="PS00252">
    <property type="entry name" value="INTERFERON_A_B_D"/>
    <property type="match status" value="1"/>
</dbReference>
<accession>P49879</accession>
<evidence type="ECO:0000250" key="1"/>
<evidence type="ECO:0000250" key="2">
    <source>
        <dbReference type="UniProtKB" id="P01562"/>
    </source>
</evidence>
<evidence type="ECO:0000255" key="3"/>
<evidence type="ECO:0000305" key="4"/>
<protein>
    <recommendedName>
        <fullName>Interferon alpha-1</fullName>
        <shortName>IFN-alpha-1</shortName>
    </recommendedName>
</protein>
<sequence length="189" mass="21434">MAPTSAFLTALVLLSCNAICSLGCDLPQTHSLAHTRALRLLAQMRRISPFSCLDHRRDFGSPHEAFGGNQVQKAQAMALVHEMLQQTFQLFSTEGSAAAWNESLLHQFYTGLDQQLRDLEACVMQEAGLEGTPLLEEDSIRAVRKYFHRLTLYLQEKSYSPCAWEIVRAEVMRSFSSSRNLQDRLRKKE</sequence>